<gene>
    <name evidence="1" type="primary">entH</name>
    <name type="ordered locus">SARI_02337</name>
</gene>
<dbReference type="EC" id="3.1.2.-" evidence="1"/>
<dbReference type="EMBL" id="CP000880">
    <property type="protein sequence ID" value="ABX22200.1"/>
    <property type="molecule type" value="Genomic_DNA"/>
</dbReference>
<dbReference type="SMR" id="A9ML30"/>
<dbReference type="STRING" id="41514.SARI_02337"/>
<dbReference type="KEGG" id="ses:SARI_02337"/>
<dbReference type="HOGENOM" id="CLU_089876_13_1_6"/>
<dbReference type="UniPathway" id="UPA00017"/>
<dbReference type="Proteomes" id="UP000002084">
    <property type="component" value="Chromosome"/>
</dbReference>
<dbReference type="GO" id="GO:0005829">
    <property type="term" value="C:cytosol"/>
    <property type="evidence" value="ECO:0007669"/>
    <property type="project" value="TreeGrafter"/>
</dbReference>
<dbReference type="GO" id="GO:0061522">
    <property type="term" value="F:1,4-dihydroxy-2-naphthoyl-CoA thioesterase activity"/>
    <property type="evidence" value="ECO:0007669"/>
    <property type="project" value="TreeGrafter"/>
</dbReference>
<dbReference type="GO" id="GO:0009239">
    <property type="term" value="P:enterobactin biosynthetic process"/>
    <property type="evidence" value="ECO:0007669"/>
    <property type="project" value="UniProtKB-UniRule"/>
</dbReference>
<dbReference type="CDD" id="cd03443">
    <property type="entry name" value="PaaI_thioesterase"/>
    <property type="match status" value="1"/>
</dbReference>
<dbReference type="FunFam" id="3.10.129.10:FF:000002">
    <property type="entry name" value="1,4-dihydroxy-2-naphthoyl-CoA hydrolase"/>
    <property type="match status" value="1"/>
</dbReference>
<dbReference type="Gene3D" id="3.10.129.10">
    <property type="entry name" value="Hotdog Thioesterase"/>
    <property type="match status" value="1"/>
</dbReference>
<dbReference type="HAMAP" id="MF_00907">
    <property type="entry name" value="Thioesterase_EntH"/>
    <property type="match status" value="1"/>
</dbReference>
<dbReference type="InterPro" id="IPR029069">
    <property type="entry name" value="HotDog_dom_sf"/>
</dbReference>
<dbReference type="InterPro" id="IPR003736">
    <property type="entry name" value="PAAI_dom"/>
</dbReference>
<dbReference type="InterPro" id="IPR026576">
    <property type="entry name" value="Thioesterase_EntH"/>
</dbReference>
<dbReference type="InterPro" id="IPR006683">
    <property type="entry name" value="Thioestr_dom"/>
</dbReference>
<dbReference type="NCBIfam" id="NF007607">
    <property type="entry name" value="PRK10254.1"/>
    <property type="match status" value="1"/>
</dbReference>
<dbReference type="NCBIfam" id="TIGR00369">
    <property type="entry name" value="unchar_dom_1"/>
    <property type="match status" value="1"/>
</dbReference>
<dbReference type="PANTHER" id="PTHR43240">
    <property type="entry name" value="1,4-DIHYDROXY-2-NAPHTHOYL-COA THIOESTERASE 1"/>
    <property type="match status" value="1"/>
</dbReference>
<dbReference type="PANTHER" id="PTHR43240:SF9">
    <property type="entry name" value="PROOFREADING THIOESTERASE ENTH"/>
    <property type="match status" value="1"/>
</dbReference>
<dbReference type="Pfam" id="PF03061">
    <property type="entry name" value="4HBT"/>
    <property type="match status" value="1"/>
</dbReference>
<dbReference type="SUPFAM" id="SSF54637">
    <property type="entry name" value="Thioesterase/thiol ester dehydrase-isomerase"/>
    <property type="match status" value="1"/>
</dbReference>
<protein>
    <recommendedName>
        <fullName evidence="1">Proofreading thioesterase EntH</fullName>
        <ecNumber evidence="1">3.1.2.-</ecNumber>
    </recommendedName>
    <alternativeName>
        <fullName evidence="1">Enterobactin synthase component H</fullName>
    </alternativeName>
</protein>
<keyword id="KW-0963">Cytoplasm</keyword>
<keyword id="KW-0378">Hydrolase</keyword>
<keyword id="KW-1185">Reference proteome</keyword>
<comment type="function">
    <text evidence="1">Required for optimal enterobactin synthesis. Acts as a proofreading enzyme that prevents EntB misacylation by hydrolyzing the thioester bound existing between EntB and wrongly charged molecules.</text>
</comment>
<comment type="pathway">
    <text evidence="1">Siderophore biosynthesis; enterobactin biosynthesis.</text>
</comment>
<comment type="subunit">
    <text evidence="1">Homotetramer. Dimer of dimers. Interacts specifically with the aryl carrier protein (ArCP) domain of EntB.</text>
</comment>
<comment type="subcellular location">
    <subcellularLocation>
        <location evidence="1">Cytoplasm</location>
    </subcellularLocation>
</comment>
<comment type="similarity">
    <text evidence="1">Belongs to the thioesterase PaaI family.</text>
</comment>
<name>ENTH_SALAR</name>
<organism>
    <name type="scientific">Salmonella arizonae (strain ATCC BAA-731 / CDC346-86 / RSK2980)</name>
    <dbReference type="NCBI Taxonomy" id="41514"/>
    <lineage>
        <taxon>Bacteria</taxon>
        <taxon>Pseudomonadati</taxon>
        <taxon>Pseudomonadota</taxon>
        <taxon>Gammaproteobacteria</taxon>
        <taxon>Enterobacterales</taxon>
        <taxon>Enterobacteriaceae</taxon>
        <taxon>Salmonella</taxon>
    </lineage>
</organism>
<sequence length="138" mass="15105">MMIWKRDLTLDELNATSQNTLVAHLGIVYTRLGDEVLEAEMPVDIRTHQPFGLLHGGASAALAETLGSMAGYLMTRDGQCVVGTELNATHHRAVSQGKVRGVCQPLHLGRQNQSWEITLFDEQGRRCCTCRLGTAVMG</sequence>
<accession>A9ML30</accession>
<proteinExistence type="inferred from homology"/>
<reference key="1">
    <citation type="submission" date="2007-11" db="EMBL/GenBank/DDBJ databases">
        <authorList>
            <consortium name="The Salmonella enterica serovar Arizonae Genome Sequencing Project"/>
            <person name="McClelland M."/>
            <person name="Sanderson E.K."/>
            <person name="Porwollik S."/>
            <person name="Spieth J."/>
            <person name="Clifton W.S."/>
            <person name="Fulton R."/>
            <person name="Chunyan W."/>
            <person name="Wollam A."/>
            <person name="Shah N."/>
            <person name="Pepin K."/>
            <person name="Bhonagiri V."/>
            <person name="Nash W."/>
            <person name="Johnson M."/>
            <person name="Thiruvilangam P."/>
            <person name="Wilson R."/>
        </authorList>
    </citation>
    <scope>NUCLEOTIDE SEQUENCE [LARGE SCALE GENOMIC DNA]</scope>
    <source>
        <strain>ATCC BAA-731 / CDC346-86 / RSK2980</strain>
    </source>
</reference>
<evidence type="ECO:0000255" key="1">
    <source>
        <dbReference type="HAMAP-Rule" id="MF_00907"/>
    </source>
</evidence>
<feature type="chain" id="PRO_0000413871" description="Proofreading thioesterase EntH">
    <location>
        <begin position="1"/>
        <end position="138"/>
    </location>
</feature>
<feature type="active site" description="Nucleophile or proton acceptor" evidence="1">
    <location>
        <position position="64"/>
    </location>
</feature>